<keyword id="KW-1185">Reference proteome</keyword>
<keyword id="KW-0687">Ribonucleoprotein</keyword>
<keyword id="KW-0689">Ribosomal protein</keyword>
<keyword id="KW-0694">RNA-binding</keyword>
<keyword id="KW-0699">rRNA-binding</keyword>
<sequence length="133" mass="14731">MLSDPIADMLTRIRNATRTHKETVDVPASNFKEQLANLLVAEGYVAGVERTRLDGQPADVLRLTLKYGAKREQVIKHIERISRPGRRAYVSAENLPRIQRGMGVAVVSTSKGLLPDREARKLGVGGEVICVLW</sequence>
<accession>C1CXF2</accession>
<comment type="function">
    <text evidence="1">One of the primary rRNA binding proteins, it binds directly to 16S rRNA central domain where it helps coordinate assembly of the platform of the 30S subunit.</text>
</comment>
<comment type="subunit">
    <text evidence="1">Part of the 30S ribosomal subunit. Contacts proteins S5 and S12.</text>
</comment>
<comment type="similarity">
    <text evidence="1">Belongs to the universal ribosomal protein uS8 family.</text>
</comment>
<protein>
    <recommendedName>
        <fullName evidence="1">Small ribosomal subunit protein uS8</fullName>
    </recommendedName>
    <alternativeName>
        <fullName evidence="2">30S ribosomal protein S8</fullName>
    </alternativeName>
</protein>
<proteinExistence type="inferred from homology"/>
<feature type="chain" id="PRO_1000214248" description="Small ribosomal subunit protein uS8">
    <location>
        <begin position="1"/>
        <end position="133"/>
    </location>
</feature>
<gene>
    <name evidence="1" type="primary">rpsH</name>
    <name type="ordered locus">Deide_18810</name>
</gene>
<evidence type="ECO:0000255" key="1">
    <source>
        <dbReference type="HAMAP-Rule" id="MF_01302"/>
    </source>
</evidence>
<evidence type="ECO:0000305" key="2"/>
<dbReference type="EMBL" id="CP001114">
    <property type="protein sequence ID" value="ACO46869.1"/>
    <property type="molecule type" value="Genomic_DNA"/>
</dbReference>
<dbReference type="RefSeq" id="WP_012693991.1">
    <property type="nucleotide sequence ID" value="NC_012526.1"/>
</dbReference>
<dbReference type="SMR" id="C1CXF2"/>
<dbReference type="STRING" id="546414.Deide_18810"/>
<dbReference type="PaxDb" id="546414-Deide_18810"/>
<dbReference type="KEGG" id="ddr:Deide_18810"/>
<dbReference type="eggNOG" id="COG0096">
    <property type="taxonomic scope" value="Bacteria"/>
</dbReference>
<dbReference type="HOGENOM" id="CLU_098428_0_2_0"/>
<dbReference type="OrthoDB" id="9802617at2"/>
<dbReference type="Proteomes" id="UP000002208">
    <property type="component" value="Chromosome"/>
</dbReference>
<dbReference type="GO" id="GO:1990904">
    <property type="term" value="C:ribonucleoprotein complex"/>
    <property type="evidence" value="ECO:0007669"/>
    <property type="project" value="UniProtKB-KW"/>
</dbReference>
<dbReference type="GO" id="GO:0005840">
    <property type="term" value="C:ribosome"/>
    <property type="evidence" value="ECO:0007669"/>
    <property type="project" value="UniProtKB-KW"/>
</dbReference>
<dbReference type="GO" id="GO:0019843">
    <property type="term" value="F:rRNA binding"/>
    <property type="evidence" value="ECO:0007669"/>
    <property type="project" value="UniProtKB-UniRule"/>
</dbReference>
<dbReference type="GO" id="GO:0003735">
    <property type="term" value="F:structural constituent of ribosome"/>
    <property type="evidence" value="ECO:0007669"/>
    <property type="project" value="InterPro"/>
</dbReference>
<dbReference type="GO" id="GO:0006412">
    <property type="term" value="P:translation"/>
    <property type="evidence" value="ECO:0007669"/>
    <property type="project" value="UniProtKB-UniRule"/>
</dbReference>
<dbReference type="FunFam" id="3.30.1370.30:FF:000002">
    <property type="entry name" value="30S ribosomal protein S8"/>
    <property type="match status" value="1"/>
</dbReference>
<dbReference type="FunFam" id="3.30.1490.10:FF:000001">
    <property type="entry name" value="30S ribosomal protein S8"/>
    <property type="match status" value="1"/>
</dbReference>
<dbReference type="Gene3D" id="3.30.1370.30">
    <property type="match status" value="1"/>
</dbReference>
<dbReference type="Gene3D" id="3.30.1490.10">
    <property type="match status" value="1"/>
</dbReference>
<dbReference type="HAMAP" id="MF_01302_B">
    <property type="entry name" value="Ribosomal_uS8_B"/>
    <property type="match status" value="1"/>
</dbReference>
<dbReference type="InterPro" id="IPR000630">
    <property type="entry name" value="Ribosomal_uS8"/>
</dbReference>
<dbReference type="InterPro" id="IPR047863">
    <property type="entry name" value="Ribosomal_uS8_CS"/>
</dbReference>
<dbReference type="InterPro" id="IPR035987">
    <property type="entry name" value="Ribosomal_uS8_sf"/>
</dbReference>
<dbReference type="NCBIfam" id="NF001109">
    <property type="entry name" value="PRK00136.1"/>
    <property type="match status" value="1"/>
</dbReference>
<dbReference type="PANTHER" id="PTHR11758">
    <property type="entry name" value="40S RIBOSOMAL PROTEIN S15A"/>
    <property type="match status" value="1"/>
</dbReference>
<dbReference type="Pfam" id="PF00410">
    <property type="entry name" value="Ribosomal_S8"/>
    <property type="match status" value="1"/>
</dbReference>
<dbReference type="SUPFAM" id="SSF56047">
    <property type="entry name" value="Ribosomal protein S8"/>
    <property type="match status" value="1"/>
</dbReference>
<dbReference type="PROSITE" id="PS00053">
    <property type="entry name" value="RIBOSOMAL_S8"/>
    <property type="match status" value="1"/>
</dbReference>
<name>RS8_DEIDV</name>
<reference key="1">
    <citation type="journal article" date="2009" name="PLoS Genet.">
        <title>Alliance of proteomics and genomics to unravel the specificities of Sahara bacterium Deinococcus deserti.</title>
        <authorList>
            <person name="de Groot A."/>
            <person name="Dulermo R."/>
            <person name="Ortet P."/>
            <person name="Blanchard L."/>
            <person name="Guerin P."/>
            <person name="Fernandez B."/>
            <person name="Vacherie B."/>
            <person name="Dossat C."/>
            <person name="Jolivet E."/>
            <person name="Siguier P."/>
            <person name="Chandler M."/>
            <person name="Barakat M."/>
            <person name="Dedieu A."/>
            <person name="Barbe V."/>
            <person name="Heulin T."/>
            <person name="Sommer S."/>
            <person name="Achouak W."/>
            <person name="Armengaud J."/>
        </authorList>
    </citation>
    <scope>NUCLEOTIDE SEQUENCE [LARGE SCALE GENOMIC DNA]</scope>
    <source>
        <strain>DSM 17065 / CIP 109153 / LMG 22923 / VCD115</strain>
    </source>
</reference>
<organism>
    <name type="scientific">Deinococcus deserti (strain DSM 17065 / CIP 109153 / LMG 22923 / VCD115)</name>
    <dbReference type="NCBI Taxonomy" id="546414"/>
    <lineage>
        <taxon>Bacteria</taxon>
        <taxon>Thermotogati</taxon>
        <taxon>Deinococcota</taxon>
        <taxon>Deinococci</taxon>
        <taxon>Deinococcales</taxon>
        <taxon>Deinococcaceae</taxon>
        <taxon>Deinococcus</taxon>
    </lineage>
</organism>